<name>CDNC_ECOLX</name>
<comment type="function">
    <text evidence="2 3 5 7">Cyclic nucleotide synthase (second messenger synthase) of a CBASS antivirus system (Probable) (PubMed:35536256). CBASS (cyclic oligonucleotide-based antiphage signaling system) provides immunity against bacteriophage (PubMed:35536256). The CD-NTase protein synthesizes cyclic nucleotides in response to infection; these serve as specific second messenger signals (PubMed:35536256). The signals activate a diverse range of effectors, leading to bacterial cell death and thus abortive phage infection (PubMed:35536256). A type III CBASS system (PubMed:35536256). Expression of this CBASS system (Cap17-CapW-CdnC-Cap7-Cap6-Cap18-Cap19) in a susceptible E.coli (strain JP313) confers resistance to bacteriophage lambda cI- (PubMed:35536256). Probable cyclic nucleotide synthase that upon activation catalyzes the synthesis of a cyclic nucleotide (Probable) (PubMed:35536256). A cyclase activity for an enzyme identical to this one was not identified in (PubMed:30787435).</text>
</comment>
<comment type="cofactor">
    <cofactor evidence="1">
        <name>Mg(2+)</name>
        <dbReference type="ChEBI" id="CHEBI:18420"/>
    </cofactor>
</comment>
<comment type="subunit">
    <text evidence="1">Forms complexes with Cap7 with 1:1 and 2:2 stoichimetry, and a 1:1:6 CdnC:Cap7:Cap6 complex.</text>
</comment>
<comment type="similarity">
    <text evidence="4">Belongs to the CD-NTase family. C01 subfamily.</text>
</comment>
<dbReference type="EC" id="2.7.7.-" evidence="1"/>
<dbReference type="EMBL" id="CP054230">
    <property type="protein sequence ID" value="QKY44556.1"/>
    <property type="molecule type" value="Genomic_DNA"/>
</dbReference>
<dbReference type="RefSeq" id="WP_001534692.1">
    <property type="nucleotide sequence ID" value="NZ_WIKR01000024.1"/>
</dbReference>
<dbReference type="SMR" id="P0DX77"/>
<dbReference type="GO" id="GO:0005829">
    <property type="term" value="C:cytosol"/>
    <property type="evidence" value="ECO:0007669"/>
    <property type="project" value="TreeGrafter"/>
</dbReference>
<dbReference type="GO" id="GO:0016020">
    <property type="term" value="C:membrane"/>
    <property type="evidence" value="ECO:0007669"/>
    <property type="project" value="TreeGrafter"/>
</dbReference>
<dbReference type="GO" id="GO:0001730">
    <property type="term" value="F:2'-5'-oligoadenylate synthetase activity"/>
    <property type="evidence" value="ECO:0007669"/>
    <property type="project" value="TreeGrafter"/>
</dbReference>
<dbReference type="GO" id="GO:0005524">
    <property type="term" value="F:ATP binding"/>
    <property type="evidence" value="ECO:0007669"/>
    <property type="project" value="UniProtKB-KW"/>
</dbReference>
<dbReference type="GO" id="GO:0003725">
    <property type="term" value="F:double-stranded RNA binding"/>
    <property type="evidence" value="ECO:0007669"/>
    <property type="project" value="TreeGrafter"/>
</dbReference>
<dbReference type="GO" id="GO:0046872">
    <property type="term" value="F:metal ion binding"/>
    <property type="evidence" value="ECO:0007669"/>
    <property type="project" value="UniProtKB-KW"/>
</dbReference>
<dbReference type="GO" id="GO:0051607">
    <property type="term" value="P:defense response to virus"/>
    <property type="evidence" value="ECO:0007669"/>
    <property type="project" value="UniProtKB-KW"/>
</dbReference>
<dbReference type="GO" id="GO:0009117">
    <property type="term" value="P:nucleotide metabolic process"/>
    <property type="evidence" value="ECO:0007669"/>
    <property type="project" value="UniProtKB-KW"/>
</dbReference>
<dbReference type="CDD" id="cd05400">
    <property type="entry name" value="NT_2-5OAS_ClassI-CCAase"/>
    <property type="match status" value="1"/>
</dbReference>
<dbReference type="Gene3D" id="1.10.1410.20">
    <property type="entry name" value="2'-5'-oligoadenylate synthetase 1, domain 2"/>
    <property type="match status" value="1"/>
</dbReference>
<dbReference type="Gene3D" id="3.30.460.10">
    <property type="entry name" value="Beta Polymerase, domain 2"/>
    <property type="match status" value="1"/>
</dbReference>
<dbReference type="InterPro" id="IPR053445">
    <property type="entry name" value="CBASS_cN_synthase"/>
</dbReference>
<dbReference type="InterPro" id="IPR006116">
    <property type="entry name" value="NT_2-5OAS_ClassI-CCAase"/>
</dbReference>
<dbReference type="InterPro" id="IPR043519">
    <property type="entry name" value="NT_sf"/>
</dbReference>
<dbReference type="NCBIfam" id="NF041116">
    <property type="entry name" value="CBASS_cyclase_a"/>
    <property type="match status" value="1"/>
</dbReference>
<dbReference type="PANTHER" id="PTHR11258">
    <property type="entry name" value="2-5 OLIGOADENYLATE SYNTHETASE"/>
    <property type="match status" value="1"/>
</dbReference>
<dbReference type="PANTHER" id="PTHR11258:SF11">
    <property type="entry name" value="C2H2-TYPE DOMAIN-CONTAINING PROTEIN"/>
    <property type="match status" value="1"/>
</dbReference>
<dbReference type="Pfam" id="PF18144">
    <property type="entry name" value="SMODS"/>
    <property type="match status" value="1"/>
</dbReference>
<dbReference type="SUPFAM" id="SSF81301">
    <property type="entry name" value="Nucleotidyltransferase"/>
    <property type="match status" value="1"/>
</dbReference>
<dbReference type="SUPFAM" id="SSF81631">
    <property type="entry name" value="PAP/OAS1 substrate-binding domain"/>
    <property type="match status" value="1"/>
</dbReference>
<evidence type="ECO:0000250" key="1">
    <source>
        <dbReference type="UniProtKB" id="D7Y2H2"/>
    </source>
</evidence>
<evidence type="ECO:0000269" key="2">
    <source>
    </source>
</evidence>
<evidence type="ECO:0000269" key="3">
    <source>
    </source>
</evidence>
<evidence type="ECO:0000303" key="4">
    <source>
    </source>
</evidence>
<evidence type="ECO:0000303" key="5">
    <source>
    </source>
</evidence>
<evidence type="ECO:0000305" key="6"/>
<evidence type="ECO:0000305" key="7">
    <source>
    </source>
</evidence>
<evidence type="ECO:0000312" key="8">
    <source>
        <dbReference type="EMBL" id="QKY44556.1"/>
    </source>
</evidence>
<sequence>MPLTNTQIRYYDSNVLRLPKDKRETYNAQVDRLITALRKKLKDQDKITIKRVVKAGSFAKHTILRKTSDSQVDVDVVFYVSGEKVAEETFASLSEKIYEALLKMYPNKAVEDFEIQRKAATVSFVGTGLDVDIVPVIENPDKEGYGWQFDRIDGSKTETCAPCQIKFVKERKDQDPDFRTLVRLAKRWRTNMECPLKSFHIELIMAHVLEVNGKDGSLEKRFRDFLLYIAESGLKEVITFPENSTIPAFSHPVVILDPVCDTNNVTSRITEDERKEIVRIAEKSWATANFASVEGDYDIWKELFGRSFKVEDAA</sequence>
<reference evidence="8" key="1">
    <citation type="journal article" date="2020" name="Microbiol. Resour. Announc.">
        <title>Complete Genome Sequences of Seven Uropathogenic Escherichia coli Strains Isolated from Postmenopausal Women with Recurrent Urinary Tract Infection.</title>
        <authorList>
            <person name="Sharon B.M."/>
            <person name="Nguyen A."/>
            <person name="Arute A.P."/>
            <person name="Hulyalkar N.V."/>
            <person name="Nguyen V.H."/>
            <person name="Zimmern P.E."/>
            <person name="De Nisco N.J."/>
        </authorList>
    </citation>
    <scope>NUCLEOTIDE SEQUENCE [LARGE SCALE GENOMIC DNA]</scope>
    <source>
        <strain>EcPF14 UPEC</strain>
    </source>
</reference>
<reference key="2">
    <citation type="journal article" date="2019" name="Nature">
        <title>Bacterial cGAS-like enzymes synthesize diverse nucleotide signals.</title>
        <authorList>
            <person name="Whiteley A.T."/>
            <person name="Eaglesham J.B."/>
            <person name="de Oliveira Mann C.C."/>
            <person name="Morehouse B.R."/>
            <person name="Lowey B."/>
            <person name="Nieminen E.A."/>
            <person name="Danilchanka O."/>
            <person name="King D.S."/>
            <person name="Lee A.S.Y."/>
            <person name="Mekalanos J.J."/>
            <person name="Kranzusch P.J."/>
        </authorList>
    </citation>
    <scope>NOMENCLATURE</scope>
    <scope>SIMILARITY</scope>
</reference>
<reference key="3">
    <citation type="journal article" date="2022" name="Nucleic Acids Res.">
        <title>Control of bacterial immune signaling by a WYL domain transcription factor.</title>
        <authorList>
            <person name="Blankenchip C.L."/>
            <person name="Nguyen J.V."/>
            <person name="Lau R.K."/>
            <person name="Ye Q."/>
            <person name="Gu Y."/>
            <person name="Corbett K.D."/>
        </authorList>
    </citation>
    <scope>FUNCTION</scope>
    <scope>FUNCTION IN VIRAL DEFENSE</scope>
    <scope>MUTAGENESIS OF 73-ASP--ASP-75</scope>
    <source>
        <strain>EcPF14 UPEC</strain>
    </source>
</reference>
<keyword id="KW-0051">Antiviral defense</keyword>
<keyword id="KW-0067">ATP-binding</keyword>
<keyword id="KW-0460">Magnesium</keyword>
<keyword id="KW-0479">Metal-binding</keyword>
<keyword id="KW-0546">Nucleotide metabolism</keyword>
<keyword id="KW-0547">Nucleotide-binding</keyword>
<keyword id="KW-0548">Nucleotidyltransferase</keyword>
<keyword id="KW-0808">Transferase</keyword>
<gene>
    <name evidence="5" type="primary">cdnC</name>
    <name evidence="8" type="ORF">HR072_00385</name>
</gene>
<proteinExistence type="evidence at protein level"/>
<feature type="chain" id="PRO_0000459329" description="CBASS oligonucleotide cyclase CdnC">
    <location>
        <begin position="1"/>
        <end position="314"/>
    </location>
</feature>
<feature type="binding site" evidence="1">
    <location>
        <position position="60"/>
    </location>
    <ligand>
        <name>ATP</name>
        <dbReference type="ChEBI" id="CHEBI:30616"/>
    </ligand>
</feature>
<feature type="binding site" evidence="1">
    <location>
        <position position="73"/>
    </location>
    <ligand>
        <name>Mg(2+)</name>
        <dbReference type="ChEBI" id="CHEBI:18420"/>
    </ligand>
</feature>
<feature type="binding site" evidence="1">
    <location>
        <position position="75"/>
    </location>
    <ligand>
        <name>ATP</name>
        <dbReference type="ChEBI" id="CHEBI:30616"/>
    </ligand>
</feature>
<feature type="binding site" evidence="1">
    <location>
        <position position="75"/>
    </location>
    <ligand>
        <name>Mg(2+)</name>
        <dbReference type="ChEBI" id="CHEBI:18420"/>
    </ligand>
</feature>
<feature type="binding site" evidence="1">
    <location>
        <position position="186"/>
    </location>
    <ligand>
        <name>ATP</name>
        <dbReference type="ChEBI" id="CHEBI:30616"/>
    </ligand>
</feature>
<feature type="binding site" evidence="1">
    <location>
        <begin position="197"/>
        <end position="199"/>
    </location>
    <ligand>
        <name>ATP</name>
        <dbReference type="ChEBI" id="CHEBI:30616"/>
    </ligand>
</feature>
<feature type="binding site" evidence="1">
    <location>
        <position position="263"/>
    </location>
    <ligand>
        <name>ATP</name>
        <dbReference type="ChEBI" id="CHEBI:30616"/>
    </ligand>
</feature>
<feature type="mutagenesis site" description="No longer confers resistance to bacteriophage lambda." evidence="3">
    <original>DVD</original>
    <variation>NDN</variation>
    <location>
        <begin position="73"/>
        <end position="75"/>
    </location>
</feature>
<organism>
    <name type="scientific">Escherichia coli</name>
    <dbReference type="NCBI Taxonomy" id="562"/>
    <lineage>
        <taxon>Bacteria</taxon>
        <taxon>Pseudomonadati</taxon>
        <taxon>Pseudomonadota</taxon>
        <taxon>Gammaproteobacteria</taxon>
        <taxon>Enterobacterales</taxon>
        <taxon>Enterobacteriaceae</taxon>
        <taxon>Escherichia</taxon>
    </lineage>
</organism>
<accession>P0DX77</accession>
<protein>
    <recommendedName>
        <fullName evidence="6">CBASS oligonucleotide cyclase CdnC</fullName>
        <ecNumber evidence="1">2.7.7.-</ecNumber>
    </recommendedName>
    <alternativeName>
        <fullName evidence="4">CD-NTase019</fullName>
    </alternativeName>
</protein>